<proteinExistence type="inferred from homology"/>
<dbReference type="EC" id="2.1.2.9" evidence="1"/>
<dbReference type="EMBL" id="CP000720">
    <property type="protein sequence ID" value="ABS47272.1"/>
    <property type="molecule type" value="Genomic_DNA"/>
</dbReference>
<dbReference type="RefSeq" id="WP_002209020.1">
    <property type="nucleotide sequence ID" value="NC_009708.1"/>
</dbReference>
<dbReference type="SMR" id="A7FNK3"/>
<dbReference type="GeneID" id="57974363"/>
<dbReference type="KEGG" id="ypi:YpsIP31758_3883"/>
<dbReference type="HOGENOM" id="CLU_033347_1_2_6"/>
<dbReference type="Proteomes" id="UP000002412">
    <property type="component" value="Chromosome"/>
</dbReference>
<dbReference type="GO" id="GO:0005829">
    <property type="term" value="C:cytosol"/>
    <property type="evidence" value="ECO:0007669"/>
    <property type="project" value="TreeGrafter"/>
</dbReference>
<dbReference type="GO" id="GO:0004479">
    <property type="term" value="F:methionyl-tRNA formyltransferase activity"/>
    <property type="evidence" value="ECO:0007669"/>
    <property type="project" value="UniProtKB-UniRule"/>
</dbReference>
<dbReference type="CDD" id="cd08646">
    <property type="entry name" value="FMT_core_Met-tRNA-FMT_N"/>
    <property type="match status" value="1"/>
</dbReference>
<dbReference type="CDD" id="cd08704">
    <property type="entry name" value="Met_tRNA_FMT_C"/>
    <property type="match status" value="1"/>
</dbReference>
<dbReference type="FunFam" id="3.10.25.10:FF:000001">
    <property type="entry name" value="Methionyl-tRNA formyltransferase"/>
    <property type="match status" value="1"/>
</dbReference>
<dbReference type="FunFam" id="3.40.50.12230:FF:000001">
    <property type="entry name" value="Methionyl-tRNA formyltransferase"/>
    <property type="match status" value="1"/>
</dbReference>
<dbReference type="FunFam" id="3.40.50.170:FF:000003">
    <property type="entry name" value="Methionyl-tRNA formyltransferase"/>
    <property type="match status" value="1"/>
</dbReference>
<dbReference type="Gene3D" id="3.10.25.10">
    <property type="entry name" value="Formyl transferase, C-terminal domain"/>
    <property type="match status" value="1"/>
</dbReference>
<dbReference type="Gene3D" id="3.40.50.170">
    <property type="entry name" value="Formyl transferase, N-terminal domain"/>
    <property type="match status" value="1"/>
</dbReference>
<dbReference type="HAMAP" id="MF_00182">
    <property type="entry name" value="Formyl_trans"/>
    <property type="match status" value="1"/>
</dbReference>
<dbReference type="InterPro" id="IPR005794">
    <property type="entry name" value="Fmt"/>
</dbReference>
<dbReference type="InterPro" id="IPR005793">
    <property type="entry name" value="Formyl_trans_C"/>
</dbReference>
<dbReference type="InterPro" id="IPR037022">
    <property type="entry name" value="Formyl_trans_C_sf"/>
</dbReference>
<dbReference type="InterPro" id="IPR002376">
    <property type="entry name" value="Formyl_transf_N"/>
</dbReference>
<dbReference type="InterPro" id="IPR036477">
    <property type="entry name" value="Formyl_transf_N_sf"/>
</dbReference>
<dbReference type="InterPro" id="IPR011034">
    <property type="entry name" value="Formyl_transferase-like_C_sf"/>
</dbReference>
<dbReference type="InterPro" id="IPR001555">
    <property type="entry name" value="GART_AS"/>
</dbReference>
<dbReference type="InterPro" id="IPR044135">
    <property type="entry name" value="Met-tRNA-FMT_C"/>
</dbReference>
<dbReference type="InterPro" id="IPR041711">
    <property type="entry name" value="Met-tRNA-FMT_N"/>
</dbReference>
<dbReference type="NCBIfam" id="TIGR00460">
    <property type="entry name" value="fmt"/>
    <property type="match status" value="1"/>
</dbReference>
<dbReference type="PANTHER" id="PTHR11138">
    <property type="entry name" value="METHIONYL-TRNA FORMYLTRANSFERASE"/>
    <property type="match status" value="1"/>
</dbReference>
<dbReference type="PANTHER" id="PTHR11138:SF5">
    <property type="entry name" value="METHIONYL-TRNA FORMYLTRANSFERASE, MITOCHONDRIAL"/>
    <property type="match status" value="1"/>
</dbReference>
<dbReference type="Pfam" id="PF02911">
    <property type="entry name" value="Formyl_trans_C"/>
    <property type="match status" value="1"/>
</dbReference>
<dbReference type="Pfam" id="PF00551">
    <property type="entry name" value="Formyl_trans_N"/>
    <property type="match status" value="1"/>
</dbReference>
<dbReference type="SUPFAM" id="SSF50486">
    <property type="entry name" value="FMT C-terminal domain-like"/>
    <property type="match status" value="1"/>
</dbReference>
<dbReference type="SUPFAM" id="SSF53328">
    <property type="entry name" value="Formyltransferase"/>
    <property type="match status" value="1"/>
</dbReference>
<dbReference type="PROSITE" id="PS00373">
    <property type="entry name" value="GART"/>
    <property type="match status" value="1"/>
</dbReference>
<accession>A7FNK3</accession>
<evidence type="ECO:0000255" key="1">
    <source>
        <dbReference type="HAMAP-Rule" id="MF_00182"/>
    </source>
</evidence>
<keyword id="KW-0648">Protein biosynthesis</keyword>
<keyword id="KW-0808">Transferase</keyword>
<name>FMT_YERP3</name>
<gene>
    <name evidence="1" type="primary">fmt</name>
    <name type="ordered locus">YpsIP31758_3883</name>
</gene>
<reference key="1">
    <citation type="journal article" date="2007" name="PLoS Genet.">
        <title>The complete genome sequence of Yersinia pseudotuberculosis IP31758, the causative agent of Far East scarlet-like fever.</title>
        <authorList>
            <person name="Eppinger M."/>
            <person name="Rosovitz M.J."/>
            <person name="Fricke W.F."/>
            <person name="Rasko D.A."/>
            <person name="Kokorina G."/>
            <person name="Fayolle C."/>
            <person name="Lindler L.E."/>
            <person name="Carniel E."/>
            <person name="Ravel J."/>
        </authorList>
    </citation>
    <scope>NUCLEOTIDE SEQUENCE [LARGE SCALE GENOMIC DNA]</scope>
    <source>
        <strain>IP 31758</strain>
    </source>
</reference>
<protein>
    <recommendedName>
        <fullName evidence="1">Methionyl-tRNA formyltransferase</fullName>
        <ecNumber evidence="1">2.1.2.9</ecNumber>
    </recommendedName>
</protein>
<organism>
    <name type="scientific">Yersinia pseudotuberculosis serotype O:1b (strain IP 31758)</name>
    <dbReference type="NCBI Taxonomy" id="349747"/>
    <lineage>
        <taxon>Bacteria</taxon>
        <taxon>Pseudomonadati</taxon>
        <taxon>Pseudomonadota</taxon>
        <taxon>Gammaproteobacteria</taxon>
        <taxon>Enterobacterales</taxon>
        <taxon>Yersiniaceae</taxon>
        <taxon>Yersinia</taxon>
    </lineage>
</organism>
<comment type="function">
    <text evidence="1">Attaches a formyl group to the free amino group of methionyl-tRNA(fMet). The formyl group appears to play a dual role in the initiator identity of N-formylmethionyl-tRNA by promoting its recognition by IF2 and preventing the misappropriation of this tRNA by the elongation apparatus.</text>
</comment>
<comment type="catalytic activity">
    <reaction evidence="1">
        <text>L-methionyl-tRNA(fMet) + (6R)-10-formyltetrahydrofolate = N-formyl-L-methionyl-tRNA(fMet) + (6S)-5,6,7,8-tetrahydrofolate + H(+)</text>
        <dbReference type="Rhea" id="RHEA:24380"/>
        <dbReference type="Rhea" id="RHEA-COMP:9952"/>
        <dbReference type="Rhea" id="RHEA-COMP:9953"/>
        <dbReference type="ChEBI" id="CHEBI:15378"/>
        <dbReference type="ChEBI" id="CHEBI:57453"/>
        <dbReference type="ChEBI" id="CHEBI:78530"/>
        <dbReference type="ChEBI" id="CHEBI:78844"/>
        <dbReference type="ChEBI" id="CHEBI:195366"/>
        <dbReference type="EC" id="2.1.2.9"/>
    </reaction>
</comment>
<comment type="similarity">
    <text evidence="1">Belongs to the Fmt family.</text>
</comment>
<feature type="chain" id="PRO_1000058410" description="Methionyl-tRNA formyltransferase">
    <location>
        <begin position="1"/>
        <end position="315"/>
    </location>
</feature>
<feature type="binding site" evidence="1">
    <location>
        <begin position="113"/>
        <end position="116"/>
    </location>
    <ligand>
        <name>(6S)-5,6,7,8-tetrahydrofolate</name>
        <dbReference type="ChEBI" id="CHEBI:57453"/>
    </ligand>
</feature>
<sequence length="315" mass="34140">MSDSLRIIFAGTPDFAARHLGALLSSQHKIVGVFTQPDRPAGRGNKLTPSPVKILAEHHGIPVFQPKSLRPEENQHLVADLNADIMVVVAYGLILPAAVLAMPRLGCINVHGSLLPRWRGAAPIQRSVWAGDEKTGITIMQMDIGLDTGAMLHKIECAIQPEDTSATLYDKLAQLGPQGLLITLQQLAAGTALAEVQNETQATYAEKLSKEEAKLDWTLSATQLERCIRAFNPWPVSYFIVDEQPIKVWQAQVLPAGEDAEPGTIIHADKHGIQVATADGVLNITQLQPAGKKAMSAADLLNSRREWFIPGSQLV</sequence>